<gene>
    <name evidence="1" type="primary">engB</name>
    <name type="ordered locus">azo2822</name>
</gene>
<reference key="1">
    <citation type="journal article" date="2006" name="Nat. Biotechnol.">
        <title>Complete genome of the mutualistic, N2-fixing grass endophyte Azoarcus sp. strain BH72.</title>
        <authorList>
            <person name="Krause A."/>
            <person name="Ramakumar A."/>
            <person name="Bartels D."/>
            <person name="Battistoni F."/>
            <person name="Bekel T."/>
            <person name="Boch J."/>
            <person name="Boehm M."/>
            <person name="Friedrich F."/>
            <person name="Hurek T."/>
            <person name="Krause L."/>
            <person name="Linke B."/>
            <person name="McHardy A.C."/>
            <person name="Sarkar A."/>
            <person name="Schneiker S."/>
            <person name="Syed A.A."/>
            <person name="Thauer R."/>
            <person name="Vorhoelter F.-J."/>
            <person name="Weidner S."/>
            <person name="Puehler A."/>
            <person name="Reinhold-Hurek B."/>
            <person name="Kaiser O."/>
            <person name="Goesmann A."/>
        </authorList>
    </citation>
    <scope>NUCLEOTIDE SEQUENCE [LARGE SCALE GENOMIC DNA]</scope>
    <source>
        <strain>BH72</strain>
    </source>
</reference>
<name>ENGB_AZOSB</name>
<feature type="chain" id="PRO_1000005797" description="Probable GTP-binding protein EngB">
    <location>
        <begin position="1"/>
        <end position="209"/>
    </location>
</feature>
<feature type="domain" description="EngB-type G" evidence="1">
    <location>
        <begin position="23"/>
        <end position="198"/>
    </location>
</feature>
<feature type="binding site" evidence="1">
    <location>
        <begin position="31"/>
        <end position="38"/>
    </location>
    <ligand>
        <name>GTP</name>
        <dbReference type="ChEBI" id="CHEBI:37565"/>
    </ligand>
</feature>
<feature type="binding site" evidence="1">
    <location>
        <position position="38"/>
    </location>
    <ligand>
        <name>Mg(2+)</name>
        <dbReference type="ChEBI" id="CHEBI:18420"/>
    </ligand>
</feature>
<feature type="binding site" evidence="1">
    <location>
        <begin position="58"/>
        <end position="62"/>
    </location>
    <ligand>
        <name>GTP</name>
        <dbReference type="ChEBI" id="CHEBI:37565"/>
    </ligand>
</feature>
<feature type="binding site" evidence="1">
    <location>
        <position position="60"/>
    </location>
    <ligand>
        <name>Mg(2+)</name>
        <dbReference type="ChEBI" id="CHEBI:18420"/>
    </ligand>
</feature>
<feature type="binding site" evidence="1">
    <location>
        <begin position="76"/>
        <end position="79"/>
    </location>
    <ligand>
        <name>GTP</name>
        <dbReference type="ChEBI" id="CHEBI:37565"/>
    </ligand>
</feature>
<feature type="binding site" evidence="1">
    <location>
        <begin position="143"/>
        <end position="146"/>
    </location>
    <ligand>
        <name>GTP</name>
        <dbReference type="ChEBI" id="CHEBI:37565"/>
    </ligand>
</feature>
<feature type="binding site" evidence="1">
    <location>
        <begin position="177"/>
        <end position="179"/>
    </location>
    <ligand>
        <name>GTP</name>
        <dbReference type="ChEBI" id="CHEBI:37565"/>
    </ligand>
</feature>
<dbReference type="EMBL" id="AM406670">
    <property type="protein sequence ID" value="CAL95438.1"/>
    <property type="molecule type" value="Genomic_DNA"/>
</dbReference>
<dbReference type="RefSeq" id="WP_011766548.1">
    <property type="nucleotide sequence ID" value="NC_008702.1"/>
</dbReference>
<dbReference type="SMR" id="A1K9D3"/>
<dbReference type="STRING" id="62928.azo2822"/>
<dbReference type="KEGG" id="aoa:dqs_2961"/>
<dbReference type="KEGG" id="azo:azo2822"/>
<dbReference type="eggNOG" id="COG0218">
    <property type="taxonomic scope" value="Bacteria"/>
</dbReference>
<dbReference type="HOGENOM" id="CLU_033732_1_0_4"/>
<dbReference type="OrthoDB" id="9804921at2"/>
<dbReference type="Proteomes" id="UP000002588">
    <property type="component" value="Chromosome"/>
</dbReference>
<dbReference type="GO" id="GO:0005829">
    <property type="term" value="C:cytosol"/>
    <property type="evidence" value="ECO:0007669"/>
    <property type="project" value="TreeGrafter"/>
</dbReference>
<dbReference type="GO" id="GO:0005525">
    <property type="term" value="F:GTP binding"/>
    <property type="evidence" value="ECO:0007669"/>
    <property type="project" value="UniProtKB-UniRule"/>
</dbReference>
<dbReference type="GO" id="GO:0046872">
    <property type="term" value="F:metal ion binding"/>
    <property type="evidence" value="ECO:0007669"/>
    <property type="project" value="UniProtKB-KW"/>
</dbReference>
<dbReference type="GO" id="GO:0000917">
    <property type="term" value="P:division septum assembly"/>
    <property type="evidence" value="ECO:0007669"/>
    <property type="project" value="UniProtKB-KW"/>
</dbReference>
<dbReference type="CDD" id="cd01876">
    <property type="entry name" value="YihA_EngB"/>
    <property type="match status" value="1"/>
</dbReference>
<dbReference type="FunFam" id="3.40.50.300:FF:000098">
    <property type="entry name" value="Probable GTP-binding protein EngB"/>
    <property type="match status" value="1"/>
</dbReference>
<dbReference type="Gene3D" id="3.40.50.300">
    <property type="entry name" value="P-loop containing nucleotide triphosphate hydrolases"/>
    <property type="match status" value="1"/>
</dbReference>
<dbReference type="HAMAP" id="MF_00321">
    <property type="entry name" value="GTPase_EngB"/>
    <property type="match status" value="1"/>
</dbReference>
<dbReference type="InterPro" id="IPR030393">
    <property type="entry name" value="G_ENGB_dom"/>
</dbReference>
<dbReference type="InterPro" id="IPR006073">
    <property type="entry name" value="GTP-bd"/>
</dbReference>
<dbReference type="InterPro" id="IPR019987">
    <property type="entry name" value="GTP-bd_ribosome_bio_YsxC"/>
</dbReference>
<dbReference type="InterPro" id="IPR027417">
    <property type="entry name" value="P-loop_NTPase"/>
</dbReference>
<dbReference type="NCBIfam" id="TIGR03598">
    <property type="entry name" value="GTPase_YsxC"/>
    <property type="match status" value="1"/>
</dbReference>
<dbReference type="PANTHER" id="PTHR11649:SF13">
    <property type="entry name" value="ENGB-TYPE G DOMAIN-CONTAINING PROTEIN"/>
    <property type="match status" value="1"/>
</dbReference>
<dbReference type="PANTHER" id="PTHR11649">
    <property type="entry name" value="MSS1/TRME-RELATED GTP-BINDING PROTEIN"/>
    <property type="match status" value="1"/>
</dbReference>
<dbReference type="Pfam" id="PF01926">
    <property type="entry name" value="MMR_HSR1"/>
    <property type="match status" value="1"/>
</dbReference>
<dbReference type="SUPFAM" id="SSF52540">
    <property type="entry name" value="P-loop containing nucleoside triphosphate hydrolases"/>
    <property type="match status" value="1"/>
</dbReference>
<dbReference type="PROSITE" id="PS51706">
    <property type="entry name" value="G_ENGB"/>
    <property type="match status" value="1"/>
</dbReference>
<evidence type="ECO:0000255" key="1">
    <source>
        <dbReference type="HAMAP-Rule" id="MF_00321"/>
    </source>
</evidence>
<comment type="function">
    <text evidence="1">Necessary for normal cell division and for the maintenance of normal septation.</text>
</comment>
<comment type="cofactor">
    <cofactor evidence="1">
        <name>Mg(2+)</name>
        <dbReference type="ChEBI" id="CHEBI:18420"/>
    </cofactor>
</comment>
<comment type="similarity">
    <text evidence="1">Belongs to the TRAFAC class TrmE-Era-EngA-EngB-Septin-like GTPase superfamily. EngB GTPase family.</text>
</comment>
<protein>
    <recommendedName>
        <fullName evidence="1">Probable GTP-binding protein EngB</fullName>
    </recommendedName>
</protein>
<organism>
    <name type="scientific">Azoarcus sp. (strain BH72)</name>
    <dbReference type="NCBI Taxonomy" id="418699"/>
    <lineage>
        <taxon>Bacteria</taxon>
        <taxon>Pseudomonadati</taxon>
        <taxon>Pseudomonadota</taxon>
        <taxon>Betaproteobacteria</taxon>
        <taxon>Rhodocyclales</taxon>
        <taxon>Zoogloeaceae</taxon>
        <taxon>Azoarcus</taxon>
    </lineage>
</organism>
<sequence>MPLFRNAQFEISIAKPSGLPPPNGAEIAFAGRSNAGKSSAINTLAGHVRLAYVSKTPGRTQLINFFRLNCGALLVDLPGYGYAAVPEKIRRQWQGLIETYLRTRESLIGLVLMMDSRHPMTDLDRQMIDWFAPSGKPIHVLLTKSDKLSRGPANATLLAVRAELTARYGDQVSVQLFSSLKKTGVEEVEKVVAGWLVPAAAEGEAPAGA</sequence>
<accession>A1K9D3</accession>
<proteinExistence type="inferred from homology"/>
<keyword id="KW-0131">Cell cycle</keyword>
<keyword id="KW-0132">Cell division</keyword>
<keyword id="KW-0342">GTP-binding</keyword>
<keyword id="KW-0460">Magnesium</keyword>
<keyword id="KW-0479">Metal-binding</keyword>
<keyword id="KW-0547">Nucleotide-binding</keyword>
<keyword id="KW-1185">Reference proteome</keyword>
<keyword id="KW-0717">Septation</keyword>